<dbReference type="EMBL" id="BC114065">
    <property type="protein sequence ID" value="AAI14066.1"/>
    <property type="molecule type" value="mRNA"/>
</dbReference>
<dbReference type="RefSeq" id="NP_001039338.1">
    <property type="nucleotide sequence ID" value="NM_001045873.2"/>
</dbReference>
<dbReference type="SMR" id="Q29RR1"/>
<dbReference type="FunCoup" id="Q29RR1">
    <property type="interactions" value="3889"/>
</dbReference>
<dbReference type="STRING" id="9913.ENSBTAP00000056252"/>
<dbReference type="PaxDb" id="9913-ENSBTAP00000040694"/>
<dbReference type="GeneID" id="337889"/>
<dbReference type="KEGG" id="bta:337889"/>
<dbReference type="CTD" id="10489"/>
<dbReference type="eggNOG" id="ENOG502R5T0">
    <property type="taxonomic scope" value="Eukaryota"/>
</dbReference>
<dbReference type="InParanoid" id="Q29RR1"/>
<dbReference type="OrthoDB" id="9415738at2759"/>
<dbReference type="Proteomes" id="UP000009136">
    <property type="component" value="Unplaced"/>
</dbReference>
<dbReference type="GO" id="GO:0005737">
    <property type="term" value="C:cytoplasm"/>
    <property type="evidence" value="ECO:0000318"/>
    <property type="project" value="GO_Central"/>
</dbReference>
<dbReference type="GO" id="GO:0005634">
    <property type="term" value="C:nucleus"/>
    <property type="evidence" value="ECO:0000318"/>
    <property type="project" value="GO_Central"/>
</dbReference>
<dbReference type="FunFam" id="3.80.10.10:FF:000114">
    <property type="entry name" value="leucine-rich repeat-containing protein 41 isoform X1"/>
    <property type="match status" value="1"/>
</dbReference>
<dbReference type="FunFam" id="3.80.10.10:FF:000088">
    <property type="entry name" value="Putative leucine-rich repeat-containing protein 41"/>
    <property type="match status" value="1"/>
</dbReference>
<dbReference type="Gene3D" id="3.80.10.10">
    <property type="entry name" value="Ribonuclease Inhibitor"/>
    <property type="match status" value="2"/>
</dbReference>
<dbReference type="InterPro" id="IPR026137">
    <property type="entry name" value="Leu_rpt_41"/>
</dbReference>
<dbReference type="InterPro" id="IPR032675">
    <property type="entry name" value="LRR_dom_sf"/>
</dbReference>
<dbReference type="PANTHER" id="PTHR15354:SF1">
    <property type="entry name" value="LEUCINE-RICH REPEAT-CONTAINING PROTEIN 41"/>
    <property type="match status" value="1"/>
</dbReference>
<dbReference type="PANTHER" id="PTHR15354">
    <property type="entry name" value="MUF1"/>
    <property type="match status" value="1"/>
</dbReference>
<dbReference type="SMART" id="SM00368">
    <property type="entry name" value="LRR_RI"/>
    <property type="match status" value="3"/>
</dbReference>
<dbReference type="SUPFAM" id="SSF52047">
    <property type="entry name" value="RNI-like"/>
    <property type="match status" value="1"/>
</dbReference>
<accession>Q29RR1</accession>
<gene>
    <name type="primary">LRRC41</name>
</gene>
<name>LRC41_BOVIN</name>
<evidence type="ECO:0000250" key="1"/>
<evidence type="ECO:0000250" key="2">
    <source>
        <dbReference type="UniProtKB" id="Q15345"/>
    </source>
</evidence>
<evidence type="ECO:0000256" key="3">
    <source>
        <dbReference type="SAM" id="MobiDB-lite"/>
    </source>
</evidence>
<evidence type="ECO:0000305" key="4"/>
<protein>
    <recommendedName>
        <fullName>Leucine-rich repeat-containing protein 41</fullName>
    </recommendedName>
</protein>
<keyword id="KW-0433">Leucine-rich repeat</keyword>
<keyword id="KW-0597">Phosphoprotein</keyword>
<keyword id="KW-1185">Reference proteome</keyword>
<keyword id="KW-0677">Repeat</keyword>
<keyword id="KW-0833">Ubl conjugation pathway</keyword>
<proteinExistence type="evidence at transcript level"/>
<reference key="1">
    <citation type="submission" date="2006-02" db="EMBL/GenBank/DDBJ databases">
        <authorList>
            <consortium name="NIH - Mammalian Gene Collection (MGC) project"/>
        </authorList>
    </citation>
    <scope>NUCLEOTIDE SEQUENCE [LARGE SCALE MRNA]</scope>
    <source>
        <strain>Hereford</strain>
        <tissue>Hypothalamus</tissue>
    </source>
</reference>
<organism>
    <name type="scientific">Bos taurus</name>
    <name type="common">Bovine</name>
    <dbReference type="NCBI Taxonomy" id="9913"/>
    <lineage>
        <taxon>Eukaryota</taxon>
        <taxon>Metazoa</taxon>
        <taxon>Chordata</taxon>
        <taxon>Craniata</taxon>
        <taxon>Vertebrata</taxon>
        <taxon>Euteleostomi</taxon>
        <taxon>Mammalia</taxon>
        <taxon>Eutheria</taxon>
        <taxon>Laurasiatheria</taxon>
        <taxon>Artiodactyla</taxon>
        <taxon>Ruminantia</taxon>
        <taxon>Pecora</taxon>
        <taxon>Bovidae</taxon>
        <taxon>Bovinae</taxon>
        <taxon>Bos</taxon>
    </lineage>
</organism>
<sequence>MAAPEAWRARSCWFCEVAAATTMEATSREAAPAKSSASGPSAPPALFELCGRAVSAHMGVLESGVWALPGPILQSILPLLNIYYLERIEETALKKGLSTQAIWRRLWDELMKTRPSSLESVTCWRAKFMEAFFSHVLRGTIDVSSDRRLCDQRFSPLLHSSRHVRQLTICNMLQGATELVAEPNRRVLETLASSLHTLKFRHLLFSDVAAQQSLRQLLHQLIHHGAVSQVSLYSWPVPESALFILILTMSAGFWQPGPGGPPCRLCGEASRGRAPSRDEGSLLLGSRRPRRDAAERCAAALMASRRKSEAKQTARAAPATRVTRRSTQESLTAGGTDSKREPLPPATSHEAPGTKRPPSAPATTSSASASSSTSSSKRAPASSAPQPKPLKRFKRAAGKKGARTRQGCGAESEDLYDFVFIVAGEKEDGEEMEIGEVACGALDGSDPSCLGLPALEASQRFRSISTLELFTVPLSTEAALTLCHLLSSWVSLESLTLSYNGLGSNIFRLLDSLRALSVQAGCRLRALHLSDLFSPLPILELTRAIVRALPLLRVLSIRVDHPSQRDNPAVPGNAGPPSNVIGDEEIPENCLEQLEMGFPRGAQPAPLLCSVLKASGSLQQLSLDSATFASPQDFGLVLQTLKEYNLTLKRLSFHDMNLADCQSEVLFLLQNLTLQEITFSFCRLFEKRPAQFLPEMVAAMKGNSTLKGLRLPGNRLGNAGLLALADVFSEDSSSSLCQLDISSNCIKPDGLLEFAKRLERWGRGAFGHLRLFQNWLDQDAVTAREAIRRLRATCHVVSDSWDSSQAFADYVSTM</sequence>
<feature type="chain" id="PRO_0000292657" description="Leucine-rich repeat-containing protein 41">
    <location>
        <begin position="1"/>
        <end position="814"/>
    </location>
</feature>
<feature type="repeat" description="LRR 1">
    <location>
        <begin position="489"/>
        <end position="509"/>
    </location>
</feature>
<feature type="repeat" description="LRR 2">
    <location>
        <begin position="520"/>
        <end position="532"/>
    </location>
</feature>
<feature type="repeat" description="LRR 3">
    <location>
        <begin position="533"/>
        <end position="557"/>
    </location>
</feature>
<feature type="repeat" description="LRR 4">
    <location>
        <begin position="615"/>
        <end position="637"/>
    </location>
</feature>
<feature type="repeat" description="LRR 5">
    <location>
        <begin position="638"/>
        <end position="661"/>
    </location>
</feature>
<feature type="repeat" description="LRR 6">
    <location>
        <begin position="703"/>
        <end position="730"/>
    </location>
</feature>
<feature type="repeat" description="LRR 7">
    <location>
        <begin position="733"/>
        <end position="754"/>
    </location>
</feature>
<feature type="region of interest" description="Interaction with Elongin BC complex" evidence="1">
    <location>
        <begin position="45"/>
        <end position="54"/>
    </location>
</feature>
<feature type="region of interest" description="Disordered" evidence="3">
    <location>
        <begin position="265"/>
        <end position="408"/>
    </location>
</feature>
<feature type="compositionally biased region" description="Low complexity" evidence="3">
    <location>
        <begin position="354"/>
        <end position="385"/>
    </location>
</feature>
<feature type="compositionally biased region" description="Basic residues" evidence="3">
    <location>
        <begin position="389"/>
        <end position="403"/>
    </location>
</feature>
<feature type="modified residue" description="Phosphoserine" evidence="2">
    <location>
        <position position="155"/>
    </location>
</feature>
<feature type="modified residue" description="Phosphoserine" evidence="2">
    <location>
        <position position="276"/>
    </location>
</feature>
<feature type="modified residue" description="Phosphoserine" evidence="2">
    <location>
        <position position="326"/>
    </location>
</feature>
<feature type="modified residue" description="Phosphothreonine" evidence="2">
    <location>
        <position position="327"/>
    </location>
</feature>
<feature type="modified residue" description="Phosphoserine" evidence="2">
    <location>
        <position position="375"/>
    </location>
</feature>
<comment type="subunit">
    <text evidence="1">Part of a E3 ubiquitin ligase complex with elongin BC complex (ELOB and ELOC), RBX1 and CUL5.</text>
</comment>
<comment type="domain">
    <text evidence="1">The elongin BC complex binding domain is also known as BC-box with the consensus [APST]-L-x(3)-C-x(3)-[AILV].</text>
</comment>
<comment type="caution">
    <text evidence="4">It is uncertain whether Met-1 or Met-23 is the initiator.</text>
</comment>